<gene>
    <name evidence="1" type="primary">rbfA</name>
    <name type="ordered locus">lhv_1341</name>
</gene>
<accession>A8YVQ6</accession>
<sequence>MKHRIGRVEGEILRELTKILQKNIRDPRLSEVTITAVECMNDLSYATVYYSLLTEDANKEKEVQEGLEKAKGMMRHLLGQTLTVYKVPELIFKRDNSVKYGSKIDRLIAEVKKQDAERASK</sequence>
<reference key="1">
    <citation type="journal article" date="2008" name="J. Bacteriol.">
        <title>Genome sequence of Lactobacillus helveticus: an organism distinguished by selective gene loss and IS element expansion.</title>
        <authorList>
            <person name="Callanan M."/>
            <person name="Kaleta P."/>
            <person name="O'Callaghan J."/>
            <person name="O'Sullivan O."/>
            <person name="Jordan K."/>
            <person name="McAuliffe O."/>
            <person name="Sangrador-Vegas A."/>
            <person name="Slattery L."/>
            <person name="Fitzgerald G.F."/>
            <person name="Beresford T."/>
            <person name="Ross R.P."/>
        </authorList>
    </citation>
    <scope>NUCLEOTIDE SEQUENCE [LARGE SCALE GENOMIC DNA]</scope>
    <source>
        <strain>DPC 4571</strain>
    </source>
</reference>
<proteinExistence type="inferred from homology"/>
<name>RBFA_LACH4</name>
<comment type="function">
    <text evidence="1">One of several proteins that assist in the late maturation steps of the functional core of the 30S ribosomal subunit. Associates with free 30S ribosomal subunits (but not with 30S subunits that are part of 70S ribosomes or polysomes). Required for efficient processing of 16S rRNA. May interact with the 5'-terminal helix region of 16S rRNA.</text>
</comment>
<comment type="subunit">
    <text evidence="1">Monomer. Binds 30S ribosomal subunits, but not 50S ribosomal subunits or 70S ribosomes.</text>
</comment>
<comment type="subcellular location">
    <subcellularLocation>
        <location evidence="1">Cytoplasm</location>
    </subcellularLocation>
</comment>
<comment type="similarity">
    <text evidence="1">Belongs to the RbfA family.</text>
</comment>
<keyword id="KW-0963">Cytoplasm</keyword>
<keyword id="KW-0690">Ribosome biogenesis</keyword>
<protein>
    <recommendedName>
        <fullName evidence="1">Ribosome-binding factor A</fullName>
    </recommendedName>
</protein>
<dbReference type="EMBL" id="CP000517">
    <property type="protein sequence ID" value="ABX27343.1"/>
    <property type="molecule type" value="Genomic_DNA"/>
</dbReference>
<dbReference type="RefSeq" id="WP_012211999.1">
    <property type="nucleotide sequence ID" value="NC_010080.1"/>
</dbReference>
<dbReference type="SMR" id="A8YVQ6"/>
<dbReference type="KEGG" id="lhe:lhv_1341"/>
<dbReference type="eggNOG" id="COG0858">
    <property type="taxonomic scope" value="Bacteria"/>
</dbReference>
<dbReference type="HOGENOM" id="CLU_089475_3_0_9"/>
<dbReference type="Proteomes" id="UP000000790">
    <property type="component" value="Chromosome"/>
</dbReference>
<dbReference type="GO" id="GO:0005829">
    <property type="term" value="C:cytosol"/>
    <property type="evidence" value="ECO:0007669"/>
    <property type="project" value="TreeGrafter"/>
</dbReference>
<dbReference type="GO" id="GO:0043024">
    <property type="term" value="F:ribosomal small subunit binding"/>
    <property type="evidence" value="ECO:0007669"/>
    <property type="project" value="TreeGrafter"/>
</dbReference>
<dbReference type="GO" id="GO:0030490">
    <property type="term" value="P:maturation of SSU-rRNA"/>
    <property type="evidence" value="ECO:0007669"/>
    <property type="project" value="UniProtKB-UniRule"/>
</dbReference>
<dbReference type="Gene3D" id="3.30.300.20">
    <property type="match status" value="1"/>
</dbReference>
<dbReference type="HAMAP" id="MF_00003">
    <property type="entry name" value="RbfA"/>
    <property type="match status" value="1"/>
</dbReference>
<dbReference type="InterPro" id="IPR015946">
    <property type="entry name" value="KH_dom-like_a/b"/>
</dbReference>
<dbReference type="InterPro" id="IPR000238">
    <property type="entry name" value="RbfA"/>
</dbReference>
<dbReference type="InterPro" id="IPR023799">
    <property type="entry name" value="RbfA_dom_sf"/>
</dbReference>
<dbReference type="InterPro" id="IPR020053">
    <property type="entry name" value="Ribosome-bd_factorA_CS"/>
</dbReference>
<dbReference type="NCBIfam" id="NF010391">
    <property type="entry name" value="PRK13818.1"/>
    <property type="match status" value="1"/>
</dbReference>
<dbReference type="NCBIfam" id="TIGR00082">
    <property type="entry name" value="rbfA"/>
    <property type="match status" value="1"/>
</dbReference>
<dbReference type="PANTHER" id="PTHR33515">
    <property type="entry name" value="RIBOSOME-BINDING FACTOR A, CHLOROPLASTIC-RELATED"/>
    <property type="match status" value="1"/>
</dbReference>
<dbReference type="PANTHER" id="PTHR33515:SF1">
    <property type="entry name" value="RIBOSOME-BINDING FACTOR A, CHLOROPLASTIC-RELATED"/>
    <property type="match status" value="1"/>
</dbReference>
<dbReference type="Pfam" id="PF02033">
    <property type="entry name" value="RBFA"/>
    <property type="match status" value="1"/>
</dbReference>
<dbReference type="SUPFAM" id="SSF89919">
    <property type="entry name" value="Ribosome-binding factor A, RbfA"/>
    <property type="match status" value="1"/>
</dbReference>
<dbReference type="PROSITE" id="PS01319">
    <property type="entry name" value="RBFA"/>
    <property type="match status" value="1"/>
</dbReference>
<evidence type="ECO:0000255" key="1">
    <source>
        <dbReference type="HAMAP-Rule" id="MF_00003"/>
    </source>
</evidence>
<organism>
    <name type="scientific">Lactobacillus helveticus (strain DPC 4571)</name>
    <dbReference type="NCBI Taxonomy" id="405566"/>
    <lineage>
        <taxon>Bacteria</taxon>
        <taxon>Bacillati</taxon>
        <taxon>Bacillota</taxon>
        <taxon>Bacilli</taxon>
        <taxon>Lactobacillales</taxon>
        <taxon>Lactobacillaceae</taxon>
        <taxon>Lactobacillus</taxon>
    </lineage>
</organism>
<feature type="chain" id="PRO_1000070907" description="Ribosome-binding factor A">
    <location>
        <begin position="1"/>
        <end position="121"/>
    </location>
</feature>